<protein>
    <recommendedName>
        <fullName evidence="1">Orotidine 5'-phosphate decarboxylase</fullName>
        <ecNumber evidence="1">4.1.1.23</ecNumber>
    </recommendedName>
    <alternativeName>
        <fullName evidence="1">OMP decarboxylase</fullName>
        <shortName evidence="1">OMPDCase</shortName>
        <shortName evidence="1">OMPdecase</shortName>
    </alternativeName>
</protein>
<reference key="1">
    <citation type="journal article" date="2008" name="PLoS ONE">
        <title>Genetic basis of virulence attenuation revealed by comparative genomic analysis of Mycobacterium tuberculosis strain H37Ra versus H37Rv.</title>
        <authorList>
            <person name="Zheng H."/>
            <person name="Lu L."/>
            <person name="Wang B."/>
            <person name="Pu S."/>
            <person name="Zhang X."/>
            <person name="Zhu G."/>
            <person name="Shi W."/>
            <person name="Zhang L."/>
            <person name="Wang H."/>
            <person name="Wang S."/>
            <person name="Zhao G."/>
            <person name="Zhang Y."/>
        </authorList>
    </citation>
    <scope>NUCLEOTIDE SEQUENCE [LARGE SCALE GENOMIC DNA]</scope>
    <source>
        <strain>ATCC 25177 / H37Ra</strain>
    </source>
</reference>
<dbReference type="EC" id="4.1.1.23" evidence="1"/>
<dbReference type="EMBL" id="CP000611">
    <property type="protein sequence ID" value="ABQ73137.1"/>
    <property type="molecule type" value="Genomic_DNA"/>
</dbReference>
<dbReference type="RefSeq" id="WP_003407220.1">
    <property type="nucleotide sequence ID" value="NZ_CP016972.1"/>
</dbReference>
<dbReference type="SMR" id="A5U287"/>
<dbReference type="KEGG" id="mra:MRA_1394"/>
<dbReference type="eggNOG" id="COG0284">
    <property type="taxonomic scope" value="Bacteria"/>
</dbReference>
<dbReference type="HOGENOM" id="CLU_060704_0_0_11"/>
<dbReference type="UniPathway" id="UPA00070">
    <property type="reaction ID" value="UER00120"/>
</dbReference>
<dbReference type="Proteomes" id="UP000001988">
    <property type="component" value="Chromosome"/>
</dbReference>
<dbReference type="GO" id="GO:0004590">
    <property type="term" value="F:orotidine-5'-phosphate decarboxylase activity"/>
    <property type="evidence" value="ECO:0007669"/>
    <property type="project" value="UniProtKB-UniRule"/>
</dbReference>
<dbReference type="GO" id="GO:0006207">
    <property type="term" value="P:'de novo' pyrimidine nucleobase biosynthetic process"/>
    <property type="evidence" value="ECO:0007669"/>
    <property type="project" value="InterPro"/>
</dbReference>
<dbReference type="GO" id="GO:0044205">
    <property type="term" value="P:'de novo' UMP biosynthetic process"/>
    <property type="evidence" value="ECO:0007669"/>
    <property type="project" value="UniProtKB-UniRule"/>
</dbReference>
<dbReference type="CDD" id="cd04725">
    <property type="entry name" value="OMP_decarboxylase_like"/>
    <property type="match status" value="1"/>
</dbReference>
<dbReference type="Gene3D" id="3.20.20.70">
    <property type="entry name" value="Aldolase class I"/>
    <property type="match status" value="1"/>
</dbReference>
<dbReference type="HAMAP" id="MF_01215">
    <property type="entry name" value="OMPdecase_type2"/>
    <property type="match status" value="1"/>
</dbReference>
<dbReference type="InterPro" id="IPR013785">
    <property type="entry name" value="Aldolase_TIM"/>
</dbReference>
<dbReference type="InterPro" id="IPR018089">
    <property type="entry name" value="OMPdecase_AS"/>
</dbReference>
<dbReference type="InterPro" id="IPR011995">
    <property type="entry name" value="OMPdecase_type-2"/>
</dbReference>
<dbReference type="InterPro" id="IPR001754">
    <property type="entry name" value="OMPdeCOase_dom"/>
</dbReference>
<dbReference type="InterPro" id="IPR011060">
    <property type="entry name" value="RibuloseP-bd_barrel"/>
</dbReference>
<dbReference type="NCBIfam" id="TIGR02127">
    <property type="entry name" value="pyrF_sub2"/>
    <property type="match status" value="1"/>
</dbReference>
<dbReference type="PANTHER" id="PTHR43375">
    <property type="entry name" value="OROTIDINE 5'-PHOSPHATE DECARBOXYLASE"/>
    <property type="match status" value="1"/>
</dbReference>
<dbReference type="PANTHER" id="PTHR43375:SF1">
    <property type="entry name" value="OROTIDINE 5'-PHOSPHATE DECARBOXYLASE"/>
    <property type="match status" value="1"/>
</dbReference>
<dbReference type="Pfam" id="PF00215">
    <property type="entry name" value="OMPdecase"/>
    <property type="match status" value="1"/>
</dbReference>
<dbReference type="SMART" id="SM00934">
    <property type="entry name" value="OMPdecase"/>
    <property type="match status" value="1"/>
</dbReference>
<dbReference type="SUPFAM" id="SSF51366">
    <property type="entry name" value="Ribulose-phoshate binding barrel"/>
    <property type="match status" value="1"/>
</dbReference>
<dbReference type="PROSITE" id="PS00156">
    <property type="entry name" value="OMPDECASE"/>
    <property type="match status" value="1"/>
</dbReference>
<gene>
    <name evidence="1" type="primary">pyrF</name>
    <name type="ordered locus">MRA_1394</name>
</gene>
<accession>A5U287</accession>
<keyword id="KW-0210">Decarboxylase</keyword>
<keyword id="KW-0456">Lyase</keyword>
<keyword id="KW-0665">Pyrimidine biosynthesis</keyword>
<keyword id="KW-1185">Reference proteome</keyword>
<sequence>MTGFGLRLAEAKARRGPLCLGIDPHPELLRGWDLATTADGLAAFCDICVRAFADFAVVKPQVAFFESYGAAGFAVLERTIAELRAADVLVLADAKRGDIGATMSAYATAWVGDSPLAADAVTASPYLGFGSLRPLLEVAAAHGRGVFVLAATSNPEGAAVQNAAADGRSVAQLVVDQVGAANEAAGPGPGSIGVVVGATAPQAPDLSAFTGPVLVPGVGVQGGRPEALGGLGGAASSQLLPAVAREVLRAGPGVPELRAAGERMRDAVAYLAAV</sequence>
<name>PYRF_MYCTA</name>
<feature type="chain" id="PRO_1000066479" description="Orotidine 5'-phosphate decarboxylase">
    <location>
        <begin position="1"/>
        <end position="274"/>
    </location>
</feature>
<feature type="active site" description="Proton donor" evidence="1">
    <location>
        <position position="95"/>
    </location>
</feature>
<comment type="catalytic activity">
    <reaction evidence="1">
        <text>orotidine 5'-phosphate + H(+) = UMP + CO2</text>
        <dbReference type="Rhea" id="RHEA:11596"/>
        <dbReference type="ChEBI" id="CHEBI:15378"/>
        <dbReference type="ChEBI" id="CHEBI:16526"/>
        <dbReference type="ChEBI" id="CHEBI:57538"/>
        <dbReference type="ChEBI" id="CHEBI:57865"/>
        <dbReference type="EC" id="4.1.1.23"/>
    </reaction>
</comment>
<comment type="pathway">
    <text evidence="1">Pyrimidine metabolism; UMP biosynthesis via de novo pathway; UMP from orotate: step 2/2.</text>
</comment>
<comment type="similarity">
    <text evidence="1">Belongs to the OMP decarboxylase family. Type 2 subfamily.</text>
</comment>
<evidence type="ECO:0000255" key="1">
    <source>
        <dbReference type="HAMAP-Rule" id="MF_01215"/>
    </source>
</evidence>
<organism>
    <name type="scientific">Mycobacterium tuberculosis (strain ATCC 25177 / H37Ra)</name>
    <dbReference type="NCBI Taxonomy" id="419947"/>
    <lineage>
        <taxon>Bacteria</taxon>
        <taxon>Bacillati</taxon>
        <taxon>Actinomycetota</taxon>
        <taxon>Actinomycetes</taxon>
        <taxon>Mycobacteriales</taxon>
        <taxon>Mycobacteriaceae</taxon>
        <taxon>Mycobacterium</taxon>
        <taxon>Mycobacterium tuberculosis complex</taxon>
    </lineage>
</organism>
<proteinExistence type="inferred from homology"/>